<sequence length="137" mass="15522">MLQPKRTKFRKQFKGRIHGASKGGTDLNFGAYGLKVVEPERITARQIEAARRAITRYMKRSGRVWIRVFPDLPVTSKPTEVRMGKGKGSVDYWAARVAPGRIMFELDGVPEDVAREALRLGAAKLPIKTRFIQRIVE</sequence>
<keyword id="KW-0687">Ribonucleoprotein</keyword>
<keyword id="KW-0689">Ribosomal protein</keyword>
<keyword id="KW-0694">RNA-binding</keyword>
<keyword id="KW-0699">rRNA-binding</keyword>
<keyword id="KW-0820">tRNA-binding</keyword>
<accession>A1USM1</accession>
<evidence type="ECO:0000255" key="1">
    <source>
        <dbReference type="HAMAP-Rule" id="MF_01342"/>
    </source>
</evidence>
<evidence type="ECO:0000305" key="2"/>
<name>RL16_BARBK</name>
<proteinExistence type="inferred from homology"/>
<feature type="chain" id="PRO_0000354599" description="Large ribosomal subunit protein uL16">
    <location>
        <begin position="1"/>
        <end position="137"/>
    </location>
</feature>
<dbReference type="EMBL" id="CP000524">
    <property type="protein sequence ID" value="ABM44675.1"/>
    <property type="molecule type" value="Genomic_DNA"/>
</dbReference>
<dbReference type="EMBL" id="CP000524">
    <property type="protein sequence ID" value="ABM44954.1"/>
    <property type="molecule type" value="Genomic_DNA"/>
</dbReference>
<dbReference type="SMR" id="A1USM1"/>
<dbReference type="STRING" id="360095.BARBAKC583_0673"/>
<dbReference type="GeneID" id="4685140"/>
<dbReference type="KEGG" id="bbk:BARBAKC583_0673"/>
<dbReference type="KEGG" id="bbk:BARBAKC583_0705"/>
<dbReference type="PATRIC" id="fig|360095.6.peg.654"/>
<dbReference type="eggNOG" id="COG0197">
    <property type="taxonomic scope" value="Bacteria"/>
</dbReference>
<dbReference type="HOGENOM" id="CLU_078858_2_1_5"/>
<dbReference type="OrthoDB" id="9802589at2"/>
<dbReference type="Proteomes" id="UP000000643">
    <property type="component" value="Chromosome"/>
</dbReference>
<dbReference type="GO" id="GO:0022625">
    <property type="term" value="C:cytosolic large ribosomal subunit"/>
    <property type="evidence" value="ECO:0007669"/>
    <property type="project" value="TreeGrafter"/>
</dbReference>
<dbReference type="GO" id="GO:0019843">
    <property type="term" value="F:rRNA binding"/>
    <property type="evidence" value="ECO:0007669"/>
    <property type="project" value="UniProtKB-UniRule"/>
</dbReference>
<dbReference type="GO" id="GO:0003735">
    <property type="term" value="F:structural constituent of ribosome"/>
    <property type="evidence" value="ECO:0007669"/>
    <property type="project" value="InterPro"/>
</dbReference>
<dbReference type="GO" id="GO:0000049">
    <property type="term" value="F:tRNA binding"/>
    <property type="evidence" value="ECO:0007669"/>
    <property type="project" value="UniProtKB-KW"/>
</dbReference>
<dbReference type="GO" id="GO:0006412">
    <property type="term" value="P:translation"/>
    <property type="evidence" value="ECO:0007669"/>
    <property type="project" value="UniProtKB-UniRule"/>
</dbReference>
<dbReference type="CDD" id="cd01433">
    <property type="entry name" value="Ribosomal_L16_L10e"/>
    <property type="match status" value="1"/>
</dbReference>
<dbReference type="FunFam" id="3.90.1170.10:FF:000001">
    <property type="entry name" value="50S ribosomal protein L16"/>
    <property type="match status" value="1"/>
</dbReference>
<dbReference type="Gene3D" id="3.90.1170.10">
    <property type="entry name" value="Ribosomal protein L10e/L16"/>
    <property type="match status" value="1"/>
</dbReference>
<dbReference type="HAMAP" id="MF_01342">
    <property type="entry name" value="Ribosomal_uL16"/>
    <property type="match status" value="1"/>
</dbReference>
<dbReference type="InterPro" id="IPR047873">
    <property type="entry name" value="Ribosomal_uL16"/>
</dbReference>
<dbReference type="InterPro" id="IPR000114">
    <property type="entry name" value="Ribosomal_uL16_bact-type"/>
</dbReference>
<dbReference type="InterPro" id="IPR020798">
    <property type="entry name" value="Ribosomal_uL16_CS"/>
</dbReference>
<dbReference type="InterPro" id="IPR016180">
    <property type="entry name" value="Ribosomal_uL16_dom"/>
</dbReference>
<dbReference type="InterPro" id="IPR036920">
    <property type="entry name" value="Ribosomal_uL16_sf"/>
</dbReference>
<dbReference type="NCBIfam" id="TIGR01164">
    <property type="entry name" value="rplP_bact"/>
    <property type="match status" value="1"/>
</dbReference>
<dbReference type="PANTHER" id="PTHR12220">
    <property type="entry name" value="50S/60S RIBOSOMAL PROTEIN L16"/>
    <property type="match status" value="1"/>
</dbReference>
<dbReference type="PANTHER" id="PTHR12220:SF13">
    <property type="entry name" value="LARGE RIBOSOMAL SUBUNIT PROTEIN UL16M"/>
    <property type="match status" value="1"/>
</dbReference>
<dbReference type="Pfam" id="PF00252">
    <property type="entry name" value="Ribosomal_L16"/>
    <property type="match status" value="1"/>
</dbReference>
<dbReference type="PRINTS" id="PR00060">
    <property type="entry name" value="RIBOSOMALL16"/>
</dbReference>
<dbReference type="SUPFAM" id="SSF54686">
    <property type="entry name" value="Ribosomal protein L16p/L10e"/>
    <property type="match status" value="1"/>
</dbReference>
<dbReference type="PROSITE" id="PS00586">
    <property type="entry name" value="RIBOSOMAL_L16_1"/>
    <property type="match status" value="1"/>
</dbReference>
<dbReference type="PROSITE" id="PS00701">
    <property type="entry name" value="RIBOSOMAL_L16_2"/>
    <property type="match status" value="1"/>
</dbReference>
<organism>
    <name type="scientific">Bartonella bacilliformis (strain ATCC 35685 / KC583 / Herrer 020/F12,63)</name>
    <dbReference type="NCBI Taxonomy" id="360095"/>
    <lineage>
        <taxon>Bacteria</taxon>
        <taxon>Pseudomonadati</taxon>
        <taxon>Pseudomonadota</taxon>
        <taxon>Alphaproteobacteria</taxon>
        <taxon>Hyphomicrobiales</taxon>
        <taxon>Bartonellaceae</taxon>
        <taxon>Bartonella</taxon>
    </lineage>
</organism>
<comment type="function">
    <text evidence="1">Binds 23S rRNA and is also seen to make contacts with the A and possibly P site tRNAs.</text>
</comment>
<comment type="subunit">
    <text evidence="1">Part of the 50S ribosomal subunit.</text>
</comment>
<comment type="similarity">
    <text evidence="1">Belongs to the universal ribosomal protein uL16 family.</text>
</comment>
<gene>
    <name evidence="1" type="primary">rplP1</name>
    <name type="ordered locus">BARBAKC583_0673</name>
</gene>
<gene>
    <name evidence="1" type="primary">rplP2</name>
    <name type="ordered locus">BARBAKC583_0705</name>
</gene>
<reference key="1">
    <citation type="submission" date="2006-12" db="EMBL/GenBank/DDBJ databases">
        <authorList>
            <person name="Hendrix L."/>
            <person name="Mohamoud Y."/>
            <person name="Radune D."/>
            <person name="Shvartsbeyn A."/>
            <person name="Daugherty S."/>
            <person name="Dodson R."/>
            <person name="Durkin A.S."/>
            <person name="Harkins D."/>
            <person name="Huot H."/>
            <person name="Kothari S.P."/>
            <person name="Madupu R."/>
            <person name="Li J."/>
            <person name="Nelson W.C."/>
            <person name="Shrivastava S."/>
            <person name="Giglio M.G."/>
            <person name="Haft D."/>
            <person name="Selengut J."/>
            <person name="Fraser-Ligget C."/>
            <person name="Seshadri R."/>
        </authorList>
    </citation>
    <scope>NUCLEOTIDE SEQUENCE [LARGE SCALE GENOMIC DNA]</scope>
    <source>
        <strain>ATCC 35685 / KC583 / Herrer 020/F12,63</strain>
    </source>
</reference>
<protein>
    <recommendedName>
        <fullName evidence="1">Large ribosomal subunit protein uL16</fullName>
    </recommendedName>
    <alternativeName>
        <fullName evidence="2">50S ribosomal protein L16</fullName>
    </alternativeName>
</protein>